<keyword id="KW-0963">Cytoplasm</keyword>
<keyword id="KW-0227">DNA damage</keyword>
<keyword id="KW-0228">DNA excision</keyword>
<keyword id="KW-0234">DNA repair</keyword>
<keyword id="KW-0267">Excision nuclease</keyword>
<keyword id="KW-0742">SOS response</keyword>
<name>UVRC_KLEP3</name>
<proteinExistence type="inferred from homology"/>
<feature type="chain" id="PRO_1000099493" description="UvrABC system protein C">
    <location>
        <begin position="1"/>
        <end position="610"/>
    </location>
</feature>
<feature type="domain" description="GIY-YIG" evidence="1">
    <location>
        <begin position="16"/>
        <end position="94"/>
    </location>
</feature>
<feature type="domain" description="UVR" evidence="1">
    <location>
        <begin position="204"/>
        <end position="239"/>
    </location>
</feature>
<feature type="region of interest" description="Disordered" evidence="2">
    <location>
        <begin position="540"/>
        <end position="559"/>
    </location>
</feature>
<feature type="compositionally biased region" description="Basic residues" evidence="2">
    <location>
        <begin position="543"/>
        <end position="552"/>
    </location>
</feature>
<evidence type="ECO:0000255" key="1">
    <source>
        <dbReference type="HAMAP-Rule" id="MF_00203"/>
    </source>
</evidence>
<evidence type="ECO:0000256" key="2">
    <source>
        <dbReference type="SAM" id="MobiDB-lite"/>
    </source>
</evidence>
<sequence>MSDVFDAKAFLKTVTSQPGVYRMYDAGGTVIYVGKAKDLKKRLSSYFRSNLASRKTEALVALIAQIDVTVTHTETEALLLEHNYIKLYQPRYNVLLRDDKSYPFIFLSGDTHPRLAMHRGAKHAKGEYFGPFPNGYAVRETLALLQKIFPVRQCENSVYRNRSRPCLQYQIGRCLGPCVAGLVSEEEYAQQVEYVRLFLAGKDDQVLTQLIARMEKASQSLEFEEAARIRDQIQAVRRVTEKQFVSNTGDDLDVIGVAFEAGMACVHVLFIRQGKVLGSRSYFPKVPGGTELGEVVETFVGQFYLQGSQMRTLPGEILLDFSLGDKTLLAESLSELAGRRINVQTKPRGDRARYLKLARTNAATALTTKLAQQSTIHQRLQALATVLELPAVKRMECFDISHTMGEQTVASCVVFDSNGPLRAEYRRYNITGITPGDDYAAMNQVLRRRYGKAIDENKIPDVILIDGGKGQLAQAKAVFAELDVPWDKHHPLLLGVAKGSDRKAGLETLFFEPEGEGFSLPPDSPALHVIQHIRDESHDHAISGHRKKRAKVKSTSSLETIEGVGPKRRQMLLKYMGGLQGLQQASVEEIAKVPGISHGLAEKIFYSLKH</sequence>
<accession>B5XPW9</accession>
<reference key="1">
    <citation type="journal article" date="2008" name="PLoS Genet.">
        <title>Complete genome sequence of the N2-fixing broad host range endophyte Klebsiella pneumoniae 342 and virulence predictions verified in mice.</title>
        <authorList>
            <person name="Fouts D.E."/>
            <person name="Tyler H.L."/>
            <person name="DeBoy R.T."/>
            <person name="Daugherty S."/>
            <person name="Ren Q."/>
            <person name="Badger J.H."/>
            <person name="Durkin A.S."/>
            <person name="Huot H."/>
            <person name="Shrivastava S."/>
            <person name="Kothari S."/>
            <person name="Dodson R.J."/>
            <person name="Mohamoud Y."/>
            <person name="Khouri H."/>
            <person name="Roesch L.F.W."/>
            <person name="Krogfelt K.A."/>
            <person name="Struve C."/>
            <person name="Triplett E.W."/>
            <person name="Methe B.A."/>
        </authorList>
    </citation>
    <scope>NUCLEOTIDE SEQUENCE [LARGE SCALE GENOMIC DNA]</scope>
    <source>
        <strain>342</strain>
    </source>
</reference>
<organism>
    <name type="scientific">Klebsiella pneumoniae (strain 342)</name>
    <dbReference type="NCBI Taxonomy" id="507522"/>
    <lineage>
        <taxon>Bacteria</taxon>
        <taxon>Pseudomonadati</taxon>
        <taxon>Pseudomonadota</taxon>
        <taxon>Gammaproteobacteria</taxon>
        <taxon>Enterobacterales</taxon>
        <taxon>Enterobacteriaceae</taxon>
        <taxon>Klebsiella/Raoultella group</taxon>
        <taxon>Klebsiella</taxon>
        <taxon>Klebsiella pneumoniae complex</taxon>
    </lineage>
</organism>
<dbReference type="EMBL" id="CP000964">
    <property type="protein sequence ID" value="ACI07210.1"/>
    <property type="molecule type" value="Genomic_DNA"/>
</dbReference>
<dbReference type="SMR" id="B5XPW9"/>
<dbReference type="KEGG" id="kpe:KPK_1870"/>
<dbReference type="HOGENOM" id="CLU_014841_3_0_6"/>
<dbReference type="Proteomes" id="UP000001734">
    <property type="component" value="Chromosome"/>
</dbReference>
<dbReference type="GO" id="GO:0005737">
    <property type="term" value="C:cytoplasm"/>
    <property type="evidence" value="ECO:0007669"/>
    <property type="project" value="UniProtKB-SubCell"/>
</dbReference>
<dbReference type="GO" id="GO:0009380">
    <property type="term" value="C:excinuclease repair complex"/>
    <property type="evidence" value="ECO:0007669"/>
    <property type="project" value="InterPro"/>
</dbReference>
<dbReference type="GO" id="GO:0003677">
    <property type="term" value="F:DNA binding"/>
    <property type="evidence" value="ECO:0007669"/>
    <property type="project" value="UniProtKB-UniRule"/>
</dbReference>
<dbReference type="GO" id="GO:0009381">
    <property type="term" value="F:excinuclease ABC activity"/>
    <property type="evidence" value="ECO:0007669"/>
    <property type="project" value="UniProtKB-UniRule"/>
</dbReference>
<dbReference type="GO" id="GO:0006289">
    <property type="term" value="P:nucleotide-excision repair"/>
    <property type="evidence" value="ECO:0007669"/>
    <property type="project" value="UniProtKB-UniRule"/>
</dbReference>
<dbReference type="GO" id="GO:0009432">
    <property type="term" value="P:SOS response"/>
    <property type="evidence" value="ECO:0007669"/>
    <property type="project" value="UniProtKB-UniRule"/>
</dbReference>
<dbReference type="CDD" id="cd10434">
    <property type="entry name" value="GIY-YIG_UvrC_Cho"/>
    <property type="match status" value="1"/>
</dbReference>
<dbReference type="FunFam" id="1.10.150.20:FF:000005">
    <property type="entry name" value="UvrABC system protein C"/>
    <property type="match status" value="1"/>
</dbReference>
<dbReference type="FunFam" id="3.30.420.340:FF:000001">
    <property type="entry name" value="UvrABC system protein C"/>
    <property type="match status" value="1"/>
</dbReference>
<dbReference type="FunFam" id="3.40.1440.10:FF:000001">
    <property type="entry name" value="UvrABC system protein C"/>
    <property type="match status" value="1"/>
</dbReference>
<dbReference type="FunFam" id="4.10.860.10:FF:000002">
    <property type="entry name" value="UvrABC system protein C"/>
    <property type="match status" value="1"/>
</dbReference>
<dbReference type="Gene3D" id="1.10.150.20">
    <property type="entry name" value="5' to 3' exonuclease, C-terminal subdomain"/>
    <property type="match status" value="1"/>
</dbReference>
<dbReference type="Gene3D" id="3.40.1440.10">
    <property type="entry name" value="GIY-YIG endonuclease"/>
    <property type="match status" value="1"/>
</dbReference>
<dbReference type="Gene3D" id="4.10.860.10">
    <property type="entry name" value="UVR domain"/>
    <property type="match status" value="1"/>
</dbReference>
<dbReference type="Gene3D" id="3.30.420.340">
    <property type="entry name" value="UvrC, RNAse H endonuclease domain"/>
    <property type="match status" value="1"/>
</dbReference>
<dbReference type="HAMAP" id="MF_00203">
    <property type="entry name" value="UvrC"/>
    <property type="match status" value="1"/>
</dbReference>
<dbReference type="InterPro" id="IPR000305">
    <property type="entry name" value="GIY-YIG_endonuc"/>
</dbReference>
<dbReference type="InterPro" id="IPR035901">
    <property type="entry name" value="GIY-YIG_endonuc_sf"/>
</dbReference>
<dbReference type="InterPro" id="IPR047296">
    <property type="entry name" value="GIY-YIG_UvrC_Cho"/>
</dbReference>
<dbReference type="InterPro" id="IPR003583">
    <property type="entry name" value="Hlx-hairpin-Hlx_DNA-bd_motif"/>
</dbReference>
<dbReference type="InterPro" id="IPR010994">
    <property type="entry name" value="RuvA_2-like"/>
</dbReference>
<dbReference type="InterPro" id="IPR001943">
    <property type="entry name" value="UVR_dom"/>
</dbReference>
<dbReference type="InterPro" id="IPR036876">
    <property type="entry name" value="UVR_dom_sf"/>
</dbReference>
<dbReference type="InterPro" id="IPR050066">
    <property type="entry name" value="UvrABC_protein_C"/>
</dbReference>
<dbReference type="InterPro" id="IPR004791">
    <property type="entry name" value="UvrC"/>
</dbReference>
<dbReference type="InterPro" id="IPR001162">
    <property type="entry name" value="UvrC_RNase_H_dom"/>
</dbReference>
<dbReference type="InterPro" id="IPR038476">
    <property type="entry name" value="UvrC_RNase_H_dom_sf"/>
</dbReference>
<dbReference type="NCBIfam" id="NF001824">
    <property type="entry name" value="PRK00558.1-5"/>
    <property type="match status" value="1"/>
</dbReference>
<dbReference type="NCBIfam" id="TIGR00194">
    <property type="entry name" value="uvrC"/>
    <property type="match status" value="1"/>
</dbReference>
<dbReference type="PANTHER" id="PTHR30562:SF1">
    <property type="entry name" value="UVRABC SYSTEM PROTEIN C"/>
    <property type="match status" value="1"/>
</dbReference>
<dbReference type="PANTHER" id="PTHR30562">
    <property type="entry name" value="UVRC/OXIDOREDUCTASE"/>
    <property type="match status" value="1"/>
</dbReference>
<dbReference type="Pfam" id="PF01541">
    <property type="entry name" value="GIY-YIG"/>
    <property type="match status" value="1"/>
</dbReference>
<dbReference type="Pfam" id="PF14520">
    <property type="entry name" value="HHH_5"/>
    <property type="match status" value="1"/>
</dbReference>
<dbReference type="Pfam" id="PF02151">
    <property type="entry name" value="UVR"/>
    <property type="match status" value="1"/>
</dbReference>
<dbReference type="Pfam" id="PF22920">
    <property type="entry name" value="UvrC_RNaseH"/>
    <property type="match status" value="1"/>
</dbReference>
<dbReference type="Pfam" id="PF08459">
    <property type="entry name" value="UvrC_RNaseH_dom"/>
    <property type="match status" value="1"/>
</dbReference>
<dbReference type="SMART" id="SM00465">
    <property type="entry name" value="GIYc"/>
    <property type="match status" value="1"/>
</dbReference>
<dbReference type="SMART" id="SM00278">
    <property type="entry name" value="HhH1"/>
    <property type="match status" value="2"/>
</dbReference>
<dbReference type="SUPFAM" id="SSF46600">
    <property type="entry name" value="C-terminal UvrC-binding domain of UvrB"/>
    <property type="match status" value="1"/>
</dbReference>
<dbReference type="SUPFAM" id="SSF82771">
    <property type="entry name" value="GIY-YIG endonuclease"/>
    <property type="match status" value="1"/>
</dbReference>
<dbReference type="SUPFAM" id="SSF47781">
    <property type="entry name" value="RuvA domain 2-like"/>
    <property type="match status" value="1"/>
</dbReference>
<dbReference type="PROSITE" id="PS50164">
    <property type="entry name" value="GIY_YIG"/>
    <property type="match status" value="1"/>
</dbReference>
<dbReference type="PROSITE" id="PS50151">
    <property type="entry name" value="UVR"/>
    <property type="match status" value="1"/>
</dbReference>
<dbReference type="PROSITE" id="PS50165">
    <property type="entry name" value="UVRC"/>
    <property type="match status" value="1"/>
</dbReference>
<gene>
    <name evidence="1" type="primary">uvrC</name>
    <name type="ordered locus">KPK_1870</name>
</gene>
<protein>
    <recommendedName>
        <fullName evidence="1">UvrABC system protein C</fullName>
        <shortName evidence="1">Protein UvrC</shortName>
    </recommendedName>
    <alternativeName>
        <fullName evidence="1">Excinuclease ABC subunit C</fullName>
    </alternativeName>
</protein>
<comment type="function">
    <text evidence="1">The UvrABC repair system catalyzes the recognition and processing of DNA lesions. UvrC both incises the 5' and 3' sides of the lesion. The N-terminal half is responsible for the 3' incision and the C-terminal half is responsible for the 5' incision.</text>
</comment>
<comment type="subunit">
    <text evidence="1">Interacts with UvrB in an incision complex.</text>
</comment>
<comment type="subcellular location">
    <subcellularLocation>
        <location evidence="1">Cytoplasm</location>
    </subcellularLocation>
</comment>
<comment type="similarity">
    <text evidence="1">Belongs to the UvrC family.</text>
</comment>